<gene>
    <name type="ordered locus">lpg1999</name>
</gene>
<accession>Q5ZU09</accession>
<dbReference type="EC" id="4.2.1.96" evidence="1"/>
<dbReference type="EMBL" id="AE017354">
    <property type="protein sequence ID" value="AAU28068.1"/>
    <property type="molecule type" value="Genomic_DNA"/>
</dbReference>
<dbReference type="RefSeq" id="WP_010947715.1">
    <property type="nucleotide sequence ID" value="NC_002942.5"/>
</dbReference>
<dbReference type="RefSeq" id="YP_096015.1">
    <property type="nucleotide sequence ID" value="NC_002942.5"/>
</dbReference>
<dbReference type="SMR" id="Q5ZU09"/>
<dbReference type="STRING" id="272624.lpg1999"/>
<dbReference type="PaxDb" id="272624-lpg1999"/>
<dbReference type="KEGG" id="lpn:lpg1999"/>
<dbReference type="PATRIC" id="fig|272624.6.peg.2092"/>
<dbReference type="eggNOG" id="COG2154">
    <property type="taxonomic scope" value="Bacteria"/>
</dbReference>
<dbReference type="HOGENOM" id="CLU_081974_2_1_6"/>
<dbReference type="OrthoDB" id="5294615at2"/>
<dbReference type="Proteomes" id="UP000000609">
    <property type="component" value="Chromosome"/>
</dbReference>
<dbReference type="GO" id="GO:0008124">
    <property type="term" value="F:4-alpha-hydroxytetrahydrobiopterin dehydratase activity"/>
    <property type="evidence" value="ECO:0007669"/>
    <property type="project" value="UniProtKB-UniRule"/>
</dbReference>
<dbReference type="GO" id="GO:0006729">
    <property type="term" value="P:tetrahydrobiopterin biosynthetic process"/>
    <property type="evidence" value="ECO:0007669"/>
    <property type="project" value="InterPro"/>
</dbReference>
<dbReference type="CDD" id="cd00913">
    <property type="entry name" value="PCD_DCoH_subfamily_a"/>
    <property type="match status" value="1"/>
</dbReference>
<dbReference type="Gene3D" id="3.30.1360.20">
    <property type="entry name" value="Transcriptional coactivator/pterin dehydratase"/>
    <property type="match status" value="1"/>
</dbReference>
<dbReference type="HAMAP" id="MF_00434">
    <property type="entry name" value="Pterin_4_alpha"/>
    <property type="match status" value="1"/>
</dbReference>
<dbReference type="InterPro" id="IPR036428">
    <property type="entry name" value="PCD_sf"/>
</dbReference>
<dbReference type="InterPro" id="IPR001533">
    <property type="entry name" value="Pterin_deHydtase"/>
</dbReference>
<dbReference type="NCBIfam" id="NF002019">
    <property type="entry name" value="PRK00823.1-4"/>
    <property type="match status" value="1"/>
</dbReference>
<dbReference type="PANTHER" id="PTHR12599">
    <property type="entry name" value="PTERIN-4-ALPHA-CARBINOLAMINE DEHYDRATASE"/>
    <property type="match status" value="1"/>
</dbReference>
<dbReference type="PANTHER" id="PTHR12599:SF0">
    <property type="entry name" value="PTERIN-4-ALPHA-CARBINOLAMINE DEHYDRATASE"/>
    <property type="match status" value="1"/>
</dbReference>
<dbReference type="Pfam" id="PF01329">
    <property type="entry name" value="Pterin_4a"/>
    <property type="match status" value="1"/>
</dbReference>
<dbReference type="SUPFAM" id="SSF55248">
    <property type="entry name" value="PCD-like"/>
    <property type="match status" value="1"/>
</dbReference>
<reference key="1">
    <citation type="journal article" date="2004" name="Science">
        <title>The genomic sequence of the accidental pathogen Legionella pneumophila.</title>
        <authorList>
            <person name="Chien M."/>
            <person name="Morozova I."/>
            <person name="Shi S."/>
            <person name="Sheng H."/>
            <person name="Chen J."/>
            <person name="Gomez S.M."/>
            <person name="Asamani G."/>
            <person name="Hill K."/>
            <person name="Nuara J."/>
            <person name="Feder M."/>
            <person name="Rineer J."/>
            <person name="Greenberg J.J."/>
            <person name="Steshenko V."/>
            <person name="Park S.H."/>
            <person name="Zhao B."/>
            <person name="Teplitskaya E."/>
            <person name="Edwards J.R."/>
            <person name="Pampou S."/>
            <person name="Georghiou A."/>
            <person name="Chou I.-C."/>
            <person name="Iannuccilli W."/>
            <person name="Ulz M.E."/>
            <person name="Kim D.H."/>
            <person name="Geringer-Sameth A."/>
            <person name="Goldsberry C."/>
            <person name="Morozov P."/>
            <person name="Fischer S.G."/>
            <person name="Segal G."/>
            <person name="Qu X."/>
            <person name="Rzhetsky A."/>
            <person name="Zhang P."/>
            <person name="Cayanis E."/>
            <person name="De Jong P.J."/>
            <person name="Ju J."/>
            <person name="Kalachikov S."/>
            <person name="Shuman H.A."/>
            <person name="Russo J.J."/>
        </authorList>
    </citation>
    <scope>NUCLEOTIDE SEQUENCE [LARGE SCALE GENOMIC DNA]</scope>
    <source>
        <strain>Philadelphia 1 / ATCC 33152 / DSM 7513</strain>
    </source>
</reference>
<keyword id="KW-0456">Lyase</keyword>
<keyword id="KW-1185">Reference proteome</keyword>
<protein>
    <recommendedName>
        <fullName evidence="1">Putative pterin-4-alpha-carbinolamine dehydratase</fullName>
        <shortName evidence="1">PHS</shortName>
        <ecNumber evidence="1">4.2.1.96</ecNumber>
    </recommendedName>
    <alternativeName>
        <fullName evidence="1">4-alpha-hydroxy-tetrahydropterin dehydratase</fullName>
    </alternativeName>
    <alternativeName>
        <fullName evidence="1">Pterin carbinolamine dehydratase</fullName>
        <shortName evidence="1">PCD</shortName>
    </alternativeName>
</protein>
<organism>
    <name type="scientific">Legionella pneumophila subsp. pneumophila (strain Philadelphia 1 / ATCC 33152 / DSM 7513)</name>
    <dbReference type="NCBI Taxonomy" id="272624"/>
    <lineage>
        <taxon>Bacteria</taxon>
        <taxon>Pseudomonadati</taxon>
        <taxon>Pseudomonadota</taxon>
        <taxon>Gammaproteobacteria</taxon>
        <taxon>Legionellales</taxon>
        <taxon>Legionellaceae</taxon>
        <taxon>Legionella</taxon>
    </lineage>
</organism>
<sequence length="113" mass="12901">MTSDLSSKHCESCEGIGAALNSEQIKNLLPQLNTKWEVTEDNRIIKRAFSFKNFYETMAFVNAIAWIANIENHHPDLEVGYNYCRVHFMTHALNGLTHNDFICAAKIDKLLVD</sequence>
<evidence type="ECO:0000255" key="1">
    <source>
        <dbReference type="HAMAP-Rule" id="MF_00434"/>
    </source>
</evidence>
<comment type="catalytic activity">
    <reaction evidence="1">
        <text>(4aS,6R)-4a-hydroxy-L-erythro-5,6,7,8-tetrahydrobiopterin = (6R)-L-erythro-6,7-dihydrobiopterin + H2O</text>
        <dbReference type="Rhea" id="RHEA:11920"/>
        <dbReference type="ChEBI" id="CHEBI:15377"/>
        <dbReference type="ChEBI" id="CHEBI:15642"/>
        <dbReference type="ChEBI" id="CHEBI:43120"/>
        <dbReference type="EC" id="4.2.1.96"/>
    </reaction>
</comment>
<comment type="similarity">
    <text evidence="1">Belongs to the pterin-4-alpha-carbinolamine dehydratase family.</text>
</comment>
<proteinExistence type="inferred from homology"/>
<name>PHS_LEGPH</name>
<feature type="chain" id="PRO_0000231452" description="Putative pterin-4-alpha-carbinolamine dehydratase">
    <location>
        <begin position="1"/>
        <end position="113"/>
    </location>
</feature>